<comment type="similarity">
    <text evidence="1">Belongs to the eukaryotic ribosomal protein eS1 family.</text>
</comment>
<reference key="1">
    <citation type="journal article" date="2009" name="Proc. Natl. Acad. Sci. U.S.A.">
        <title>Biogeography of the Sulfolobus islandicus pan-genome.</title>
        <authorList>
            <person name="Reno M.L."/>
            <person name="Held N.L."/>
            <person name="Fields C.J."/>
            <person name="Burke P.V."/>
            <person name="Whitaker R.J."/>
        </authorList>
    </citation>
    <scope>NUCLEOTIDE SEQUENCE [LARGE SCALE GENOMIC DNA]</scope>
    <source>
        <strain>M.16.27</strain>
    </source>
</reference>
<keyword id="KW-0687">Ribonucleoprotein</keyword>
<keyword id="KW-0689">Ribosomal protein</keyword>
<evidence type="ECO:0000255" key="1">
    <source>
        <dbReference type="HAMAP-Rule" id="MF_00359"/>
    </source>
</evidence>
<evidence type="ECO:0000305" key="2"/>
<dbReference type="EMBL" id="CP001401">
    <property type="protein sequence ID" value="ACP55328.1"/>
    <property type="molecule type" value="Genomic_DNA"/>
</dbReference>
<dbReference type="RefSeq" id="WP_012711394.1">
    <property type="nucleotide sequence ID" value="NC_012632.1"/>
</dbReference>
<dbReference type="SMR" id="C3N5Q3"/>
<dbReference type="KEGG" id="sim:M1627_1446"/>
<dbReference type="HOGENOM" id="CLU_062507_1_0_2"/>
<dbReference type="Proteomes" id="UP000002307">
    <property type="component" value="Chromosome"/>
</dbReference>
<dbReference type="GO" id="GO:1990904">
    <property type="term" value="C:ribonucleoprotein complex"/>
    <property type="evidence" value="ECO:0007669"/>
    <property type="project" value="UniProtKB-KW"/>
</dbReference>
<dbReference type="GO" id="GO:0005840">
    <property type="term" value="C:ribosome"/>
    <property type="evidence" value="ECO:0007669"/>
    <property type="project" value="UniProtKB-KW"/>
</dbReference>
<dbReference type="GO" id="GO:0003735">
    <property type="term" value="F:structural constituent of ribosome"/>
    <property type="evidence" value="ECO:0007669"/>
    <property type="project" value="InterPro"/>
</dbReference>
<dbReference type="GO" id="GO:0006412">
    <property type="term" value="P:translation"/>
    <property type="evidence" value="ECO:0007669"/>
    <property type="project" value="UniProtKB-UniRule"/>
</dbReference>
<dbReference type="HAMAP" id="MF_00359">
    <property type="entry name" value="Ribosomal_eS1"/>
    <property type="match status" value="1"/>
</dbReference>
<dbReference type="InterPro" id="IPR001593">
    <property type="entry name" value="Ribosomal_eS1"/>
</dbReference>
<dbReference type="InterPro" id="IPR030838">
    <property type="entry name" value="Ribosomal_eS1_arc"/>
</dbReference>
<dbReference type="NCBIfam" id="NF003142">
    <property type="entry name" value="PRK04057.1"/>
    <property type="match status" value="1"/>
</dbReference>
<dbReference type="PANTHER" id="PTHR11830">
    <property type="entry name" value="40S RIBOSOMAL PROTEIN S3A"/>
    <property type="match status" value="1"/>
</dbReference>
<dbReference type="Pfam" id="PF01015">
    <property type="entry name" value="Ribosomal_S3Ae"/>
    <property type="match status" value="1"/>
</dbReference>
<dbReference type="SMART" id="SM01397">
    <property type="entry name" value="Ribosomal_S3Ae"/>
    <property type="match status" value="1"/>
</dbReference>
<organism>
    <name type="scientific">Saccharolobus islandicus (strain M.16.27)</name>
    <name type="common">Sulfolobus islandicus</name>
    <dbReference type="NCBI Taxonomy" id="427318"/>
    <lineage>
        <taxon>Archaea</taxon>
        <taxon>Thermoproteota</taxon>
        <taxon>Thermoprotei</taxon>
        <taxon>Sulfolobales</taxon>
        <taxon>Sulfolobaceae</taxon>
        <taxon>Saccharolobus</taxon>
    </lineage>
</organism>
<gene>
    <name evidence="1" type="primary">rps3ae</name>
    <name type="ordered locus">M1627_1446</name>
</gene>
<name>RS3A_SACI3</name>
<accession>C3N5Q3</accession>
<proteinExistence type="inferred from homology"/>
<feature type="chain" id="PRO_1000205380" description="Small ribosomal subunit protein eS1">
    <location>
        <begin position="1"/>
        <end position="208"/>
    </location>
</feature>
<sequence length="208" mass="23616">MSAKGGTIKDKWKMKKWYSIIAPKVFGEVSLGSTPAYDVTQTIGRRVETTLYDLTGDFSQVYVHLYFKIVSNEGDRLITRFVGHELSRDYLRSLIRRKSSKVNSVFDVTTKDGYVVRVKGLVLTTYKCHQSQKTAIRKIINETISKKASELTFDDFTQEVVFGRLANEIFEATKKIYPLRKAEIEKTKVLKVPENLGKQVESSSVSSG</sequence>
<protein>
    <recommendedName>
        <fullName evidence="1">Small ribosomal subunit protein eS1</fullName>
    </recommendedName>
    <alternativeName>
        <fullName evidence="2">30S ribosomal protein S3Ae</fullName>
    </alternativeName>
    <alternativeName>
        <fullName evidence="1">Ribosomal protein S1e</fullName>
    </alternativeName>
</protein>